<sequence>MERIHVAVRARPLTAEDAGSSPWRVSGNAIALSTQPSIRFEFDRIFGEECRTADVYGARTKHIVDSAVRGFNGTVFAYGQTNSGKTYTMRGSGNEPGIIPLAVHDLFRTIEEHLDREFLLRMSYMEIYNEEINDLLVPEHRKLQIHESIERGIYVAGLREEIVTCPEQVLEFMSFGESHRHIGETNMNVYSSRSHTIFRMVIESREKVDESEAGESCDAVRVSVLNLVDLAGSERAAKTGAEGVRLKEGSHINKSLMTLGTVIKKLSEGIEGQGGHVPYRDSKLTRILQPALGGNANTAIICNITLAQVHADETKSSLQFASRALRVTNCACVNEILTDAALLKRQRKEIEELRAKLRNSQSEHWEEEILNLRNTLLQSELEKERISLELEEEKKAKEQRDKRLIEQAKKIENLSSLVLNSERDDRTTVSSKNKRRLTWCPGLLSRQFDGQVLESVQEDPPSSTVRHGRNMEMPLHFEELIQESCESSIKHYTDAYSSGSLSCEDDSLPDSHALLHVTSRRKPNTMKKSDQEQLMGLASERIIPQELNDWKYTTQSQENIKACVNGLSARESEAILVIKQLEDQIKLLELEKSSFQNNLDDVLELATQQKASFHEKYEELQQNALVAQEQAKIANEKLSKQEAAYEFLTGIFVETESIAVQMDQSTRSVDNALSFIEELFQNLFMMAKNFTEAKQFVCGDITQFSSVIRDYENISNCLREKLSKLEMEKKILDEQSLDQKDELQRLKSSLESCEKAMEDCNIQNELEKDSILSELLTLQKEVVYLSSSSLMKEKESIRKELDRTKTKLKETENKLKNSIQEKIKLESEKAEAQREIKKLQSQRTLLERDLRKRDSFTVDKRHEQSVKSKELAGIYDQAVQIQEDYGKLEMHAFDMEAEIASLQEALVTTIAEKEEALSRVELLTSAVEDLESRLNSAESETSSLLEETAVLTRKLDASESISKKLEASISSLSREKEDMGIELTDVLLEMESERSTWTAKEKAYLEAKQKLNICNKNNCKLSEDLIKVRQELACCREQYSILEAKMIFSKNDTNEEKYCRETFEESERLLKKERNIDTGVNENELHQQLLSITEERDKLLSEIKYMNSVINESELIQAKATIDELSSRISIVEAKMKNDASAYNKENTKLRMQIRWMQPELDAHRGRLKEAINEMKLMDTKYLEASTKLKKDLSFYCREVLRLKEQLKESQVKAS</sequence>
<dbReference type="EMBL" id="AP005579">
    <property type="protein sequence ID" value="BAD33631.1"/>
    <property type="molecule type" value="Genomic_DNA"/>
</dbReference>
<dbReference type="EMBL" id="AP008215">
    <property type="protein sequence ID" value="BAF25116.1"/>
    <property type="molecule type" value="Genomic_DNA"/>
</dbReference>
<dbReference type="EMBL" id="AP014965">
    <property type="protein sequence ID" value="BAT08128.1"/>
    <property type="status" value="ALT_SEQ"/>
    <property type="molecule type" value="Genomic_DNA"/>
</dbReference>
<dbReference type="EMBL" id="CM000146">
    <property type="protein sequence ID" value="EEE69723.1"/>
    <property type="status" value="ALT_SEQ"/>
    <property type="molecule type" value="Genomic_DNA"/>
</dbReference>
<dbReference type="EMBL" id="AK059290">
    <property type="protein sequence ID" value="BAG86947.1"/>
    <property type="molecule type" value="mRNA"/>
</dbReference>
<dbReference type="SMR" id="B9G3M6"/>
<dbReference type="FunCoup" id="B9G3M6">
    <property type="interactions" value="15"/>
</dbReference>
<dbReference type="STRING" id="39947.B9G3M6"/>
<dbReference type="PaxDb" id="39947-B9G3M6"/>
<dbReference type="KEGG" id="dosa:Os09g0421200"/>
<dbReference type="eggNOG" id="KOG0242">
    <property type="taxonomic scope" value="Eukaryota"/>
</dbReference>
<dbReference type="HOGENOM" id="CLU_050448_0_0_1"/>
<dbReference type="InParanoid" id="B9G3M6"/>
<dbReference type="Proteomes" id="UP000000763">
    <property type="component" value="Chromosome 9"/>
</dbReference>
<dbReference type="Proteomes" id="UP000007752">
    <property type="component" value="Chromosome 9"/>
</dbReference>
<dbReference type="Proteomes" id="UP000059680">
    <property type="component" value="Chromosome 9"/>
</dbReference>
<dbReference type="GO" id="GO:0005874">
    <property type="term" value="C:microtubule"/>
    <property type="evidence" value="ECO:0007669"/>
    <property type="project" value="UniProtKB-KW"/>
</dbReference>
<dbReference type="GO" id="GO:0005524">
    <property type="term" value="F:ATP binding"/>
    <property type="evidence" value="ECO:0007669"/>
    <property type="project" value="UniProtKB-KW"/>
</dbReference>
<dbReference type="GO" id="GO:0008017">
    <property type="term" value="F:microtubule binding"/>
    <property type="evidence" value="ECO:0007669"/>
    <property type="project" value="InterPro"/>
</dbReference>
<dbReference type="GO" id="GO:0003777">
    <property type="term" value="F:microtubule motor activity"/>
    <property type="evidence" value="ECO:0007669"/>
    <property type="project" value="InterPro"/>
</dbReference>
<dbReference type="GO" id="GO:0007018">
    <property type="term" value="P:microtubule-based movement"/>
    <property type="evidence" value="ECO:0007669"/>
    <property type="project" value="InterPro"/>
</dbReference>
<dbReference type="CDD" id="cd01374">
    <property type="entry name" value="KISc_CENP_E"/>
    <property type="match status" value="1"/>
</dbReference>
<dbReference type="FunFam" id="3.40.850.10:FF:000026">
    <property type="entry name" value="Centromere-associated protein E"/>
    <property type="match status" value="1"/>
</dbReference>
<dbReference type="Gene3D" id="3.40.850.10">
    <property type="entry name" value="Kinesin motor domain"/>
    <property type="match status" value="1"/>
</dbReference>
<dbReference type="InterPro" id="IPR027640">
    <property type="entry name" value="Kinesin-like_fam"/>
</dbReference>
<dbReference type="InterPro" id="IPR019821">
    <property type="entry name" value="Kinesin_motor_CS"/>
</dbReference>
<dbReference type="InterPro" id="IPR001752">
    <property type="entry name" value="Kinesin_motor_dom"/>
</dbReference>
<dbReference type="InterPro" id="IPR036961">
    <property type="entry name" value="Kinesin_motor_dom_sf"/>
</dbReference>
<dbReference type="InterPro" id="IPR027417">
    <property type="entry name" value="P-loop_NTPase"/>
</dbReference>
<dbReference type="PANTHER" id="PTHR47968">
    <property type="entry name" value="CENTROMERE PROTEIN E"/>
    <property type="match status" value="1"/>
</dbReference>
<dbReference type="PANTHER" id="PTHR47968:SF75">
    <property type="entry name" value="CENTROMERE-ASSOCIATED PROTEIN E"/>
    <property type="match status" value="1"/>
</dbReference>
<dbReference type="Pfam" id="PF00225">
    <property type="entry name" value="Kinesin"/>
    <property type="match status" value="1"/>
</dbReference>
<dbReference type="PRINTS" id="PR00380">
    <property type="entry name" value="KINESINHEAVY"/>
</dbReference>
<dbReference type="SMART" id="SM00129">
    <property type="entry name" value="KISc"/>
    <property type="match status" value="1"/>
</dbReference>
<dbReference type="SUPFAM" id="SSF52540">
    <property type="entry name" value="P-loop containing nucleoside triphosphate hydrolases"/>
    <property type="match status" value="1"/>
</dbReference>
<dbReference type="PROSITE" id="PS00411">
    <property type="entry name" value="KINESIN_MOTOR_1"/>
    <property type="match status" value="1"/>
</dbReference>
<dbReference type="PROSITE" id="PS50067">
    <property type="entry name" value="KINESIN_MOTOR_2"/>
    <property type="match status" value="1"/>
</dbReference>
<protein>
    <recommendedName>
        <fullName evidence="4">Kinesin-like protein KIN-7I</fullName>
    </recommendedName>
</protein>
<gene>
    <name evidence="4" type="primary">KIN7I</name>
    <name evidence="6" type="ordered locus">Os09g0421200</name>
    <name evidence="4" type="ordered locus">LOC_Os09g25380</name>
    <name evidence="5" type="ORF">OJ1740_D06.15</name>
    <name evidence="7" type="ORF">OsJ_29398</name>
</gene>
<name>KN7I_ORYSJ</name>
<reference key="1">
    <citation type="journal article" date="2005" name="Nature">
        <title>The map-based sequence of the rice genome.</title>
        <authorList>
            <consortium name="International rice genome sequencing project (IRGSP)"/>
        </authorList>
    </citation>
    <scope>NUCLEOTIDE SEQUENCE [LARGE SCALE GENOMIC DNA]</scope>
    <source>
        <strain>cv. Nipponbare</strain>
    </source>
</reference>
<reference key="2">
    <citation type="journal article" date="2008" name="Nucleic Acids Res.">
        <title>The rice annotation project database (RAP-DB): 2008 update.</title>
        <authorList>
            <consortium name="The rice annotation project (RAP)"/>
        </authorList>
    </citation>
    <scope>GENOME REANNOTATION</scope>
    <source>
        <strain>cv. Nipponbare</strain>
    </source>
</reference>
<reference key="3">
    <citation type="journal article" date="2013" name="Rice">
        <title>Improvement of the Oryza sativa Nipponbare reference genome using next generation sequence and optical map data.</title>
        <authorList>
            <person name="Kawahara Y."/>
            <person name="de la Bastide M."/>
            <person name="Hamilton J.P."/>
            <person name="Kanamori H."/>
            <person name="McCombie W.R."/>
            <person name="Ouyang S."/>
            <person name="Schwartz D.C."/>
            <person name="Tanaka T."/>
            <person name="Wu J."/>
            <person name="Zhou S."/>
            <person name="Childs K.L."/>
            <person name="Davidson R.M."/>
            <person name="Lin H."/>
            <person name="Quesada-Ocampo L."/>
            <person name="Vaillancourt B."/>
            <person name="Sakai H."/>
            <person name="Lee S.S."/>
            <person name="Kim J."/>
            <person name="Numa H."/>
            <person name="Itoh T."/>
            <person name="Buell C.R."/>
            <person name="Matsumoto T."/>
        </authorList>
    </citation>
    <scope>GENOME REANNOTATION</scope>
    <source>
        <strain>cv. Nipponbare</strain>
    </source>
</reference>
<reference key="4">
    <citation type="journal article" date="2005" name="PLoS Biol.">
        <title>The genomes of Oryza sativa: a history of duplications.</title>
        <authorList>
            <person name="Yu J."/>
            <person name="Wang J."/>
            <person name="Lin W."/>
            <person name="Li S."/>
            <person name="Li H."/>
            <person name="Zhou J."/>
            <person name="Ni P."/>
            <person name="Dong W."/>
            <person name="Hu S."/>
            <person name="Zeng C."/>
            <person name="Zhang J."/>
            <person name="Zhang Y."/>
            <person name="Li R."/>
            <person name="Xu Z."/>
            <person name="Li S."/>
            <person name="Li X."/>
            <person name="Zheng H."/>
            <person name="Cong L."/>
            <person name="Lin L."/>
            <person name="Yin J."/>
            <person name="Geng J."/>
            <person name="Li G."/>
            <person name="Shi J."/>
            <person name="Liu J."/>
            <person name="Lv H."/>
            <person name="Li J."/>
            <person name="Wang J."/>
            <person name="Deng Y."/>
            <person name="Ran L."/>
            <person name="Shi X."/>
            <person name="Wang X."/>
            <person name="Wu Q."/>
            <person name="Li C."/>
            <person name="Ren X."/>
            <person name="Wang J."/>
            <person name="Wang X."/>
            <person name="Li D."/>
            <person name="Liu D."/>
            <person name="Zhang X."/>
            <person name="Ji Z."/>
            <person name="Zhao W."/>
            <person name="Sun Y."/>
            <person name="Zhang Z."/>
            <person name="Bao J."/>
            <person name="Han Y."/>
            <person name="Dong L."/>
            <person name="Ji J."/>
            <person name="Chen P."/>
            <person name="Wu S."/>
            <person name="Liu J."/>
            <person name="Xiao Y."/>
            <person name="Bu D."/>
            <person name="Tan J."/>
            <person name="Yang L."/>
            <person name="Ye C."/>
            <person name="Zhang J."/>
            <person name="Xu J."/>
            <person name="Zhou Y."/>
            <person name="Yu Y."/>
            <person name="Zhang B."/>
            <person name="Zhuang S."/>
            <person name="Wei H."/>
            <person name="Liu B."/>
            <person name="Lei M."/>
            <person name="Yu H."/>
            <person name="Li Y."/>
            <person name="Xu H."/>
            <person name="Wei S."/>
            <person name="He X."/>
            <person name="Fang L."/>
            <person name="Zhang Z."/>
            <person name="Zhang Y."/>
            <person name="Huang X."/>
            <person name="Su Z."/>
            <person name="Tong W."/>
            <person name="Li J."/>
            <person name="Tong Z."/>
            <person name="Li S."/>
            <person name="Ye J."/>
            <person name="Wang L."/>
            <person name="Fang L."/>
            <person name="Lei T."/>
            <person name="Chen C.-S."/>
            <person name="Chen H.-C."/>
            <person name="Xu Z."/>
            <person name="Li H."/>
            <person name="Huang H."/>
            <person name="Zhang F."/>
            <person name="Xu H."/>
            <person name="Li N."/>
            <person name="Zhao C."/>
            <person name="Li S."/>
            <person name="Dong L."/>
            <person name="Huang Y."/>
            <person name="Li L."/>
            <person name="Xi Y."/>
            <person name="Qi Q."/>
            <person name="Li W."/>
            <person name="Zhang B."/>
            <person name="Hu W."/>
            <person name="Zhang Y."/>
            <person name="Tian X."/>
            <person name="Jiao Y."/>
            <person name="Liang X."/>
            <person name="Jin J."/>
            <person name="Gao L."/>
            <person name="Zheng W."/>
            <person name="Hao B."/>
            <person name="Liu S.-M."/>
            <person name="Wang W."/>
            <person name="Yuan L."/>
            <person name="Cao M."/>
            <person name="McDermott J."/>
            <person name="Samudrala R."/>
            <person name="Wang J."/>
            <person name="Wong G.K.-S."/>
            <person name="Yang H."/>
        </authorList>
    </citation>
    <scope>NUCLEOTIDE SEQUENCE [LARGE SCALE GENOMIC DNA]</scope>
    <source>
        <strain>cv. Nipponbare</strain>
    </source>
</reference>
<reference key="5">
    <citation type="journal article" date="2003" name="Science">
        <title>Collection, mapping, and annotation of over 28,000 cDNA clones from japonica rice.</title>
        <authorList>
            <consortium name="The rice full-length cDNA consortium"/>
        </authorList>
    </citation>
    <scope>NUCLEOTIDE SEQUENCE [LARGE SCALE MRNA] (ISOFORM 2)</scope>
    <source>
        <strain>cv. Nipponbare</strain>
    </source>
</reference>
<reference key="6">
    <citation type="journal article" date="2009" name="Ann. Bot.">
        <title>Evaluating the microtubule cytoskeleton and its interacting proteins in monocots by mining the rice genome.</title>
        <authorList>
            <person name="Guo L."/>
            <person name="Ho C.M."/>
            <person name="Kong Z."/>
            <person name="Lee Y.R."/>
            <person name="Qian Q."/>
            <person name="Liu B."/>
        </authorList>
    </citation>
    <scope>GENE FAMILY</scope>
    <scope>NOMENCLATURE</scope>
</reference>
<comment type="alternative products">
    <event type="alternative splicing"/>
    <isoform>
        <id>B9G3M6-1</id>
        <name>1</name>
        <sequence type="displayed"/>
    </isoform>
    <isoform>
        <id>B9G3M6-2</id>
        <name>2</name>
        <sequence type="described" ref="VSP_058399 VSP_058400 VSP_058401"/>
    </isoform>
</comment>
<comment type="similarity">
    <text evidence="3">Belongs to the TRAFAC class myosin-kinesin ATPase superfamily. Kinesin family. KIN-7 subfamily.</text>
</comment>
<comment type="sequence caution" evidence="4">
    <conflict type="erroneous gene model prediction">
        <sequence resource="EMBL-CDS" id="BAT08128"/>
    </conflict>
</comment>
<comment type="sequence caution" evidence="4">
    <conflict type="erroneous gene model prediction">
        <sequence resource="EMBL-CDS" id="EEE69723"/>
    </conflict>
</comment>
<organism>
    <name type="scientific">Oryza sativa subsp. japonica</name>
    <name type="common">Rice</name>
    <dbReference type="NCBI Taxonomy" id="39947"/>
    <lineage>
        <taxon>Eukaryota</taxon>
        <taxon>Viridiplantae</taxon>
        <taxon>Streptophyta</taxon>
        <taxon>Embryophyta</taxon>
        <taxon>Tracheophyta</taxon>
        <taxon>Spermatophyta</taxon>
        <taxon>Magnoliopsida</taxon>
        <taxon>Liliopsida</taxon>
        <taxon>Poales</taxon>
        <taxon>Poaceae</taxon>
        <taxon>BOP clade</taxon>
        <taxon>Oryzoideae</taxon>
        <taxon>Oryzeae</taxon>
        <taxon>Oryzinae</taxon>
        <taxon>Oryza</taxon>
        <taxon>Oryza sativa</taxon>
    </lineage>
</organism>
<accession>B9G3M6</accession>
<accession>A0A0P0XMC6</accession>
<accession>Q69P65</accession>
<proteinExistence type="evidence at transcript level"/>
<feature type="chain" id="PRO_0000436630" description="Kinesin-like protein KIN-7I">
    <location>
        <begin position="1"/>
        <end position="1215"/>
    </location>
</feature>
<feature type="domain" description="Kinesin motor" evidence="2">
    <location>
        <begin position="3"/>
        <end position="327"/>
    </location>
</feature>
<feature type="coiled-coil region" evidence="1">
    <location>
        <begin position="333"/>
        <end position="414"/>
    </location>
</feature>
<feature type="coiled-coil region" evidence="1">
    <location>
        <begin position="571"/>
        <end position="646"/>
    </location>
</feature>
<feature type="coiled-coil region" evidence="1">
    <location>
        <begin position="708"/>
        <end position="855"/>
    </location>
</feature>
<feature type="coiled-coil region" evidence="1">
    <location>
        <begin position="894"/>
        <end position="979"/>
    </location>
</feature>
<feature type="binding site" evidence="2">
    <location>
        <begin position="79"/>
        <end position="86"/>
    </location>
    <ligand>
        <name>ATP</name>
        <dbReference type="ChEBI" id="CHEBI:30616"/>
    </ligand>
</feature>
<feature type="splice variant" id="VSP_058399" description="In isoform 2.">
    <location>
        <begin position="1"/>
        <end position="726"/>
    </location>
</feature>
<feature type="splice variant" id="VSP_058400" description="In isoform 2.">
    <original>CRET</original>
    <variation>WLVL</variation>
    <location>
        <begin position="1059"/>
        <end position="1062"/>
    </location>
</feature>
<feature type="splice variant" id="VSP_058401" description="In isoform 2.">
    <location>
        <begin position="1063"/>
        <end position="1215"/>
    </location>
</feature>
<keyword id="KW-0025">Alternative splicing</keyword>
<keyword id="KW-0067">ATP-binding</keyword>
<keyword id="KW-0175">Coiled coil</keyword>
<keyword id="KW-0493">Microtubule</keyword>
<keyword id="KW-0505">Motor protein</keyword>
<keyword id="KW-0547">Nucleotide-binding</keyword>
<keyword id="KW-1185">Reference proteome</keyword>
<evidence type="ECO:0000255" key="1"/>
<evidence type="ECO:0000255" key="2">
    <source>
        <dbReference type="PROSITE-ProRule" id="PRU00283"/>
    </source>
</evidence>
<evidence type="ECO:0000303" key="3">
    <source>
    </source>
</evidence>
<evidence type="ECO:0000305" key="4"/>
<evidence type="ECO:0000312" key="5">
    <source>
        <dbReference type="EMBL" id="BAD33631.1"/>
    </source>
</evidence>
<evidence type="ECO:0000312" key="6">
    <source>
        <dbReference type="EMBL" id="BAT08128.1"/>
    </source>
</evidence>
<evidence type="ECO:0000312" key="7">
    <source>
        <dbReference type="EMBL" id="EEE69723.1"/>
    </source>
</evidence>